<reference key="1">
    <citation type="journal article" date="2008" name="BMC Genomics">
        <title>Genomics of an extreme psychrophile, Psychromonas ingrahamii.</title>
        <authorList>
            <person name="Riley M."/>
            <person name="Staley J.T."/>
            <person name="Danchin A."/>
            <person name="Wang T.Z."/>
            <person name="Brettin T.S."/>
            <person name="Hauser L.J."/>
            <person name="Land M.L."/>
            <person name="Thompson L.S."/>
        </authorList>
    </citation>
    <scope>NUCLEOTIDE SEQUENCE [LARGE SCALE GENOMIC DNA]</scope>
    <source>
        <strain>DSM 17664 / CCUG 51855 / 37</strain>
    </source>
</reference>
<protein>
    <recommendedName>
        <fullName evidence="1">7-cyano-7-deazaguanine synthase</fullName>
        <ecNumber evidence="1">6.3.4.20</ecNumber>
    </recommendedName>
    <alternativeName>
        <fullName evidence="1">7-cyano-7-carbaguanine synthase</fullName>
    </alternativeName>
    <alternativeName>
        <fullName evidence="1">PreQ(0) synthase</fullName>
    </alternativeName>
    <alternativeName>
        <fullName evidence="1">Queuosine biosynthesis protein QueC</fullName>
    </alternativeName>
</protein>
<dbReference type="EC" id="6.3.4.20" evidence="1"/>
<dbReference type="EMBL" id="CP000510">
    <property type="protein sequence ID" value="ABM02938.1"/>
    <property type="molecule type" value="Genomic_DNA"/>
</dbReference>
<dbReference type="RefSeq" id="WP_011769501.1">
    <property type="nucleotide sequence ID" value="NC_008709.1"/>
</dbReference>
<dbReference type="SMR" id="A1STX3"/>
<dbReference type="STRING" id="357804.Ping_1099"/>
<dbReference type="KEGG" id="pin:Ping_1099"/>
<dbReference type="eggNOG" id="COG0603">
    <property type="taxonomic scope" value="Bacteria"/>
</dbReference>
<dbReference type="HOGENOM" id="CLU_081854_1_0_6"/>
<dbReference type="OrthoDB" id="9789567at2"/>
<dbReference type="UniPathway" id="UPA00391"/>
<dbReference type="Proteomes" id="UP000000639">
    <property type="component" value="Chromosome"/>
</dbReference>
<dbReference type="GO" id="GO:0005524">
    <property type="term" value="F:ATP binding"/>
    <property type="evidence" value="ECO:0007669"/>
    <property type="project" value="UniProtKB-UniRule"/>
</dbReference>
<dbReference type="GO" id="GO:0016879">
    <property type="term" value="F:ligase activity, forming carbon-nitrogen bonds"/>
    <property type="evidence" value="ECO:0007669"/>
    <property type="project" value="UniProtKB-UniRule"/>
</dbReference>
<dbReference type="GO" id="GO:0008270">
    <property type="term" value="F:zinc ion binding"/>
    <property type="evidence" value="ECO:0007669"/>
    <property type="project" value="UniProtKB-UniRule"/>
</dbReference>
<dbReference type="GO" id="GO:0008616">
    <property type="term" value="P:queuosine biosynthetic process"/>
    <property type="evidence" value="ECO:0007669"/>
    <property type="project" value="UniProtKB-UniRule"/>
</dbReference>
<dbReference type="CDD" id="cd01995">
    <property type="entry name" value="QueC-like"/>
    <property type="match status" value="1"/>
</dbReference>
<dbReference type="Gene3D" id="3.40.50.620">
    <property type="entry name" value="HUPs"/>
    <property type="match status" value="1"/>
</dbReference>
<dbReference type="HAMAP" id="MF_01633">
    <property type="entry name" value="QueC"/>
    <property type="match status" value="1"/>
</dbReference>
<dbReference type="InterPro" id="IPR018317">
    <property type="entry name" value="QueC"/>
</dbReference>
<dbReference type="InterPro" id="IPR014729">
    <property type="entry name" value="Rossmann-like_a/b/a_fold"/>
</dbReference>
<dbReference type="NCBIfam" id="TIGR00364">
    <property type="entry name" value="7-cyano-7-deazaguanine synthase QueC"/>
    <property type="match status" value="1"/>
</dbReference>
<dbReference type="PANTHER" id="PTHR42914">
    <property type="entry name" value="7-CYANO-7-DEAZAGUANINE SYNTHASE"/>
    <property type="match status" value="1"/>
</dbReference>
<dbReference type="PANTHER" id="PTHR42914:SF1">
    <property type="entry name" value="7-CYANO-7-DEAZAGUANINE SYNTHASE"/>
    <property type="match status" value="1"/>
</dbReference>
<dbReference type="Pfam" id="PF06508">
    <property type="entry name" value="QueC"/>
    <property type="match status" value="1"/>
</dbReference>
<dbReference type="PIRSF" id="PIRSF006293">
    <property type="entry name" value="ExsB"/>
    <property type="match status" value="1"/>
</dbReference>
<dbReference type="SUPFAM" id="SSF52402">
    <property type="entry name" value="Adenine nucleotide alpha hydrolases-like"/>
    <property type="match status" value="1"/>
</dbReference>
<comment type="function">
    <text evidence="1">Catalyzes the ATP-dependent conversion of 7-carboxy-7-deazaguanine (CDG) to 7-cyano-7-deazaguanine (preQ(0)).</text>
</comment>
<comment type="catalytic activity">
    <reaction evidence="1">
        <text>7-carboxy-7-deazaguanine + NH4(+) + ATP = 7-cyano-7-deazaguanine + ADP + phosphate + H2O + H(+)</text>
        <dbReference type="Rhea" id="RHEA:27982"/>
        <dbReference type="ChEBI" id="CHEBI:15377"/>
        <dbReference type="ChEBI" id="CHEBI:15378"/>
        <dbReference type="ChEBI" id="CHEBI:28938"/>
        <dbReference type="ChEBI" id="CHEBI:30616"/>
        <dbReference type="ChEBI" id="CHEBI:43474"/>
        <dbReference type="ChEBI" id="CHEBI:45075"/>
        <dbReference type="ChEBI" id="CHEBI:61036"/>
        <dbReference type="ChEBI" id="CHEBI:456216"/>
        <dbReference type="EC" id="6.3.4.20"/>
    </reaction>
</comment>
<comment type="cofactor">
    <cofactor evidence="1">
        <name>Zn(2+)</name>
        <dbReference type="ChEBI" id="CHEBI:29105"/>
    </cofactor>
    <text evidence="1">Binds 1 zinc ion per subunit.</text>
</comment>
<comment type="pathway">
    <text evidence="1">Purine metabolism; 7-cyano-7-deazaguanine biosynthesis.</text>
</comment>
<comment type="similarity">
    <text evidence="1">Belongs to the QueC family.</text>
</comment>
<sequence>MSKKVVVIYSGGMDSFTVLHKAMQQGLTPYALTFDYGQRHIKEIEVAREVCEELGVHHKVIDISAINQLIGGSSLTDSSIDVAQGHYQQESMKSTVVPNRNMILLSLAIGYAVSLGAEQVYYGAHSGDHEIYPDCRPIFVEKMNDVAAVANYEKVEIFSPYLNNNKSGILKDGLAMGLDYSKTWTCYNGREKACGKCGSCVERLEAFAANGLKDPIAYEDT</sequence>
<organism>
    <name type="scientific">Psychromonas ingrahamii (strain DSM 17664 / CCUG 51855 / 37)</name>
    <dbReference type="NCBI Taxonomy" id="357804"/>
    <lineage>
        <taxon>Bacteria</taxon>
        <taxon>Pseudomonadati</taxon>
        <taxon>Pseudomonadota</taxon>
        <taxon>Gammaproteobacteria</taxon>
        <taxon>Alteromonadales</taxon>
        <taxon>Psychromonadaceae</taxon>
        <taxon>Psychromonas</taxon>
    </lineage>
</organism>
<keyword id="KW-0067">ATP-binding</keyword>
<keyword id="KW-0436">Ligase</keyword>
<keyword id="KW-0479">Metal-binding</keyword>
<keyword id="KW-0547">Nucleotide-binding</keyword>
<keyword id="KW-0671">Queuosine biosynthesis</keyword>
<keyword id="KW-1185">Reference proteome</keyword>
<keyword id="KW-0862">Zinc</keyword>
<evidence type="ECO:0000255" key="1">
    <source>
        <dbReference type="HAMAP-Rule" id="MF_01633"/>
    </source>
</evidence>
<proteinExistence type="inferred from homology"/>
<accession>A1STX3</accession>
<feature type="chain" id="PRO_0000336940" description="7-cyano-7-deazaguanine synthase">
    <location>
        <begin position="1"/>
        <end position="221"/>
    </location>
</feature>
<feature type="binding site" evidence="1">
    <location>
        <begin position="9"/>
        <end position="19"/>
    </location>
    <ligand>
        <name>ATP</name>
        <dbReference type="ChEBI" id="CHEBI:30616"/>
    </ligand>
</feature>
<feature type="binding site" evidence="1">
    <location>
        <position position="186"/>
    </location>
    <ligand>
        <name>Zn(2+)</name>
        <dbReference type="ChEBI" id="CHEBI:29105"/>
    </ligand>
</feature>
<feature type="binding site" evidence="1">
    <location>
        <position position="194"/>
    </location>
    <ligand>
        <name>Zn(2+)</name>
        <dbReference type="ChEBI" id="CHEBI:29105"/>
    </ligand>
</feature>
<feature type="binding site" evidence="1">
    <location>
        <position position="197"/>
    </location>
    <ligand>
        <name>Zn(2+)</name>
        <dbReference type="ChEBI" id="CHEBI:29105"/>
    </ligand>
</feature>
<feature type="binding site" evidence="1">
    <location>
        <position position="200"/>
    </location>
    <ligand>
        <name>Zn(2+)</name>
        <dbReference type="ChEBI" id="CHEBI:29105"/>
    </ligand>
</feature>
<gene>
    <name evidence="1" type="primary">queC</name>
    <name type="ordered locus">Ping_1099</name>
</gene>
<name>QUEC_PSYIN</name>